<gene>
    <name type="primary">ybfE</name>
    <name type="ordered locus">SF0608</name>
    <name type="ordered locus">S0619</name>
</gene>
<protein>
    <recommendedName>
        <fullName>Uncharacterized protein YbfE</fullName>
    </recommendedName>
</protein>
<name>YBFE_SHIFL</name>
<organism>
    <name type="scientific">Shigella flexneri</name>
    <dbReference type="NCBI Taxonomy" id="623"/>
    <lineage>
        <taxon>Bacteria</taxon>
        <taxon>Pseudomonadati</taxon>
        <taxon>Pseudomonadota</taxon>
        <taxon>Gammaproteobacteria</taxon>
        <taxon>Enterobacterales</taxon>
        <taxon>Enterobacteriaceae</taxon>
        <taxon>Shigella</taxon>
    </lineage>
</organism>
<evidence type="ECO:0000256" key="1">
    <source>
        <dbReference type="SAM" id="MobiDB-lite"/>
    </source>
</evidence>
<evidence type="ECO:0000305" key="2"/>
<feature type="chain" id="PRO_0000168690" description="Uncharacterized protein YbfE">
    <location>
        <begin position="1"/>
        <end position="97"/>
    </location>
</feature>
<feature type="region of interest" description="Disordered" evidence="1">
    <location>
        <begin position="1"/>
        <end position="30"/>
    </location>
</feature>
<feature type="compositionally biased region" description="Basic and acidic residues" evidence="1">
    <location>
        <begin position="1"/>
        <end position="20"/>
    </location>
</feature>
<dbReference type="EMBL" id="AE005674">
    <property type="protein sequence ID" value="AAN42246.2"/>
    <property type="status" value="ALT_INIT"/>
    <property type="molecule type" value="Genomic_DNA"/>
</dbReference>
<dbReference type="EMBL" id="AE014073">
    <property type="protein sequence ID" value="AAP16117.1"/>
    <property type="status" value="ALT_INIT"/>
    <property type="molecule type" value="Genomic_DNA"/>
</dbReference>
<dbReference type="RefSeq" id="NP_706539.2">
    <property type="nucleotide sequence ID" value="NC_004337.2"/>
</dbReference>
<dbReference type="RefSeq" id="WP_001300829.1">
    <property type="nucleotide sequence ID" value="NZ_WPGW01000002.1"/>
</dbReference>
<dbReference type="SMR" id="P0AAU9"/>
<dbReference type="STRING" id="198214.SF0608"/>
<dbReference type="PaxDb" id="198214-SF0608"/>
<dbReference type="GeneID" id="1023596"/>
<dbReference type="GeneID" id="93776799"/>
<dbReference type="KEGG" id="sfl:SF0608"/>
<dbReference type="KEGG" id="sfx:S0619"/>
<dbReference type="PATRIC" id="fig|198214.7.peg.709"/>
<dbReference type="HOGENOM" id="CLU_165368_1_0_6"/>
<dbReference type="Proteomes" id="UP000001006">
    <property type="component" value="Chromosome"/>
</dbReference>
<dbReference type="Proteomes" id="UP000002673">
    <property type="component" value="Chromosome"/>
</dbReference>
<dbReference type="GO" id="GO:0006355">
    <property type="term" value="P:regulation of DNA-templated transcription"/>
    <property type="evidence" value="ECO:0007669"/>
    <property type="project" value="InterPro"/>
</dbReference>
<dbReference type="CDD" id="cd21631">
    <property type="entry name" value="RHH_CopG_NikR-like"/>
    <property type="match status" value="1"/>
</dbReference>
<dbReference type="InterPro" id="IPR002145">
    <property type="entry name" value="CopG"/>
</dbReference>
<dbReference type="InterPro" id="IPR010985">
    <property type="entry name" value="Ribbon_hlx_hlx"/>
</dbReference>
<dbReference type="NCBIfam" id="NF008671">
    <property type="entry name" value="PRK11675.1"/>
    <property type="match status" value="1"/>
</dbReference>
<dbReference type="Pfam" id="PF01402">
    <property type="entry name" value="RHH_1"/>
    <property type="match status" value="1"/>
</dbReference>
<dbReference type="SUPFAM" id="SSF47598">
    <property type="entry name" value="Ribbon-helix-helix"/>
    <property type="match status" value="1"/>
</dbReference>
<keyword id="KW-1185">Reference proteome</keyword>
<reference key="1">
    <citation type="journal article" date="2002" name="Nucleic Acids Res.">
        <title>Genome sequence of Shigella flexneri 2a: insights into pathogenicity through comparison with genomes of Escherichia coli K12 and O157.</title>
        <authorList>
            <person name="Jin Q."/>
            <person name="Yuan Z."/>
            <person name="Xu J."/>
            <person name="Wang Y."/>
            <person name="Shen Y."/>
            <person name="Lu W."/>
            <person name="Wang J."/>
            <person name="Liu H."/>
            <person name="Yang J."/>
            <person name="Yang F."/>
            <person name="Zhang X."/>
            <person name="Zhang J."/>
            <person name="Yang G."/>
            <person name="Wu H."/>
            <person name="Qu D."/>
            <person name="Dong J."/>
            <person name="Sun L."/>
            <person name="Xue Y."/>
            <person name="Zhao A."/>
            <person name="Gao Y."/>
            <person name="Zhu J."/>
            <person name="Kan B."/>
            <person name="Ding K."/>
            <person name="Chen S."/>
            <person name="Cheng H."/>
            <person name="Yao Z."/>
            <person name="He B."/>
            <person name="Chen R."/>
            <person name="Ma D."/>
            <person name="Qiang B."/>
            <person name="Wen Y."/>
            <person name="Hou Y."/>
            <person name="Yu J."/>
        </authorList>
    </citation>
    <scope>NUCLEOTIDE SEQUENCE [LARGE SCALE GENOMIC DNA]</scope>
    <source>
        <strain>301 / Serotype 2a</strain>
    </source>
</reference>
<reference key="2">
    <citation type="journal article" date="2003" name="Infect. Immun.">
        <title>Complete genome sequence and comparative genomics of Shigella flexneri serotype 2a strain 2457T.</title>
        <authorList>
            <person name="Wei J."/>
            <person name="Goldberg M.B."/>
            <person name="Burland V."/>
            <person name="Venkatesan M.M."/>
            <person name="Deng W."/>
            <person name="Fournier G."/>
            <person name="Mayhew G.F."/>
            <person name="Plunkett G. III"/>
            <person name="Rose D.J."/>
            <person name="Darling A."/>
            <person name="Mau B."/>
            <person name="Perna N.T."/>
            <person name="Payne S.M."/>
            <person name="Runyen-Janecky L.J."/>
            <person name="Zhou S."/>
            <person name="Schwartz D.C."/>
            <person name="Blattner F.R."/>
        </authorList>
    </citation>
    <scope>NUCLEOTIDE SEQUENCE [LARGE SCALE GENOMIC DNA]</scope>
    <source>
        <strain>ATCC 700930 / 2457T / Serotype 2a</strain>
    </source>
</reference>
<sequence length="97" mass="11280">MAKEQTDRTTLDLFAHERRPGRPKTNPLSRDEQLRINKRNQLKRDKVRGLKRVELKLNAEAVEALNELAESRNMSRSELIEEMLMQQLAALRSQGIV</sequence>
<comment type="sequence caution" evidence="2">
    <conflict type="erroneous initiation">
        <sequence resource="EMBL-CDS" id="AAN42246"/>
    </conflict>
    <text>Extended N-terminus.</text>
</comment>
<comment type="sequence caution" evidence="2">
    <conflict type="erroneous initiation">
        <sequence resource="EMBL-CDS" id="AAP16117"/>
    </conflict>
    <text>Extended N-terminus.</text>
</comment>
<proteinExistence type="predicted"/>
<accession>P0AAU9</accession>
<accession>P75735</accession>